<gene>
    <name evidence="6" type="primary">Hyd-8</name>
</gene>
<feature type="signal peptide" evidence="2">
    <location>
        <begin position="1"/>
        <end position="20"/>
    </location>
</feature>
<feature type="chain" id="PRO_5013988797" description="Class I hydrophobin 8">
    <location>
        <begin position="21"/>
        <end position="128"/>
    </location>
</feature>
<feature type="glycosylation site" description="N-linked (GlcNAc...) asparagine" evidence="3">
    <location>
        <position position="50"/>
    </location>
</feature>
<feature type="glycosylation site" description="N-linked (GlcNAc...) asparagine" evidence="3">
    <location>
        <position position="112"/>
    </location>
</feature>
<feature type="disulfide bond" evidence="1">
    <location>
        <begin position="49"/>
        <end position="109"/>
    </location>
</feature>
<feature type="disulfide bond" evidence="1">
    <location>
        <begin position="56"/>
        <end position="103"/>
    </location>
</feature>
<feature type="disulfide bond" evidence="1">
    <location>
        <begin position="57"/>
        <end position="90"/>
    </location>
</feature>
<feature type="disulfide bond" evidence="1">
    <location>
        <begin position="110"/>
        <end position="123"/>
    </location>
</feature>
<reference key="1">
    <citation type="journal article" date="2016" name="Mycoscience">
        <title>Further characterization of hydrophobin genes in genome of Flammulina velutipes.</title>
        <authorList>
            <person name="Kim H.-I."/>
            <person name="Lee C.-S."/>
            <person name="Park Y.-J."/>
        </authorList>
    </citation>
    <scope>NUCLEOTIDE SEQUENCE [GENOMIC DNA]</scope>
    <scope>DEVELOPMENTAL STAGE</scope>
    <scope>INDUCTION</scope>
</reference>
<reference key="2">
    <citation type="journal article" date="2020" name="Appl. Microbiol. Biotechnol.">
        <title>A putative transcription factor LFC1 negatively regulates development and yield of winter mushroom.</title>
        <authorList>
            <person name="Wu T."/>
            <person name="Hu C."/>
            <person name="Xie B."/>
            <person name="Wei S."/>
            <person name="Zhang L."/>
            <person name="Zhu Z."/>
            <person name="Zhang Z."/>
            <person name="Li S."/>
        </authorList>
    </citation>
    <scope>INDUCTION</scope>
</reference>
<dbReference type="EMBL" id="KT868840">
    <property type="protein sequence ID" value="AOV80988.1"/>
    <property type="molecule type" value="Genomic_DNA"/>
</dbReference>
<dbReference type="SMR" id="A0A1I9QLC9"/>
<dbReference type="GO" id="GO:0005576">
    <property type="term" value="C:extracellular region"/>
    <property type="evidence" value="ECO:0007669"/>
    <property type="project" value="UniProtKB-KW"/>
</dbReference>
<dbReference type="GO" id="GO:0009277">
    <property type="term" value="C:fungal-type cell wall"/>
    <property type="evidence" value="ECO:0007669"/>
    <property type="project" value="InterPro"/>
</dbReference>
<dbReference type="GO" id="GO:0005199">
    <property type="term" value="F:structural constituent of cell wall"/>
    <property type="evidence" value="ECO:0007669"/>
    <property type="project" value="InterPro"/>
</dbReference>
<dbReference type="CDD" id="cd23507">
    <property type="entry name" value="hydrophobin_I"/>
    <property type="match status" value="1"/>
</dbReference>
<dbReference type="InterPro" id="IPR001338">
    <property type="entry name" value="Hydrophobin"/>
</dbReference>
<dbReference type="Pfam" id="PF01185">
    <property type="entry name" value="Hydrophobin"/>
    <property type="match status" value="1"/>
</dbReference>
<dbReference type="SMART" id="SM00075">
    <property type="entry name" value="HYDRO"/>
    <property type="match status" value="1"/>
</dbReference>
<comment type="function">
    <text evidence="7">Aerial growth, conidiation, and dispersal of filamentous fungi in the environment rely upon a capability of their secreting small amphipathic proteins called hydrophobins (HPBs) with low sequence identity. Class I can self-assemble into an outermost layer of rodlet bundles on aerial cell surfaces, conferring cellular hydrophobicity that supports fungal growth, development and dispersal; whereas Class II form highly ordered films at water-air interfaces through intermolecular interactions but contribute nothing to the rodlet structure.</text>
</comment>
<comment type="subunit">
    <text evidence="1">Self-assembles to form functional amyloid fibrils called rodlets. Self-assembly into fibrillar rodlets occurs spontaneously at hydrophobic:hydrophilic interfaces and the rodlets further associate laterally to form amphipathic monolayers.</text>
</comment>
<comment type="subcellular location">
    <subcellularLocation>
        <location evidence="1">Secreted</location>
    </subcellularLocation>
    <subcellularLocation>
        <location evidence="1">Secreted</location>
        <location evidence="1">Cell wall</location>
    </subcellularLocation>
</comment>
<comment type="developmental stage">
    <text evidence="5">Shows relatively higher levels of expression in the primordial stages and relatively low levels in the mycelial stage.</text>
</comment>
<comment type="induction">
    <text evidence="4 5">Expression is negatively regulated by the basidioma development repressor lfc1 (PubMed:32356196). A CT-rich motif, which is often found immediately upstream of the transcription start point of highly expressed filamentous fungal genes, is present at the expected position.</text>
</comment>
<comment type="similarity">
    <text evidence="7">Belongs to the fungal hydrophobin family.</text>
</comment>
<evidence type="ECO:0000250" key="1">
    <source>
        <dbReference type="UniProtKB" id="Q04571"/>
    </source>
</evidence>
<evidence type="ECO:0000255" key="2"/>
<evidence type="ECO:0000255" key="3">
    <source>
        <dbReference type="PROSITE-ProRule" id="PRU00498"/>
    </source>
</evidence>
<evidence type="ECO:0000269" key="4">
    <source>
    </source>
</evidence>
<evidence type="ECO:0000269" key="5">
    <source ref="1"/>
</evidence>
<evidence type="ECO:0000303" key="6">
    <source ref="1"/>
</evidence>
<evidence type="ECO:0000305" key="7"/>
<organism>
    <name type="scientific">Flammulina velutipes</name>
    <name type="common">Agaricus velutipes</name>
    <dbReference type="NCBI Taxonomy" id="38945"/>
    <lineage>
        <taxon>Eukaryota</taxon>
        <taxon>Fungi</taxon>
        <taxon>Dikarya</taxon>
        <taxon>Basidiomycota</taxon>
        <taxon>Agaricomycotina</taxon>
        <taxon>Agaricomycetes</taxon>
        <taxon>Agaricomycetidae</taxon>
        <taxon>Agaricales</taxon>
        <taxon>Marasmiineae</taxon>
        <taxon>Physalacriaceae</taxon>
        <taxon>Flammulina</taxon>
    </lineage>
</organism>
<sequence length="128" mass="12641">MFALRTFAVLFASLSALAAATPLDARTNPTTTVTVTAPASTATVPAGQCNVSNQQCCNSVEKASSGPAALVLGLLGVVVQDVNVLVGLDCSPITVIGGGNGACNASPVCCENNSFGSLISIGCIPISL</sequence>
<accession>A0A1I9QLC9</accession>
<proteinExistence type="evidence at transcript level"/>
<name>HYD8_FLAVE</name>
<protein>
    <recommendedName>
        <fullName evidence="6">Class I hydrophobin 8</fullName>
    </recommendedName>
</protein>
<keyword id="KW-0134">Cell wall</keyword>
<keyword id="KW-1015">Disulfide bond</keyword>
<keyword id="KW-0325">Glycoprotein</keyword>
<keyword id="KW-0964">Secreted</keyword>
<keyword id="KW-0732">Signal</keyword>